<keyword id="KW-0131">Cell cycle</keyword>
<keyword id="KW-0132">Cell division</keyword>
<keyword id="KW-1003">Cell membrane</keyword>
<keyword id="KW-0175">Coiled coil</keyword>
<keyword id="KW-0472">Membrane</keyword>
<keyword id="KW-0717">Septation</keyword>
<keyword id="KW-0812">Transmembrane</keyword>
<keyword id="KW-1133">Transmembrane helix</keyword>
<protein>
    <recommendedName>
        <fullName evidence="1">Septation ring formation regulator EzrA</fullName>
    </recommendedName>
</protein>
<evidence type="ECO:0000255" key="1">
    <source>
        <dbReference type="HAMAP-Rule" id="MF_00728"/>
    </source>
</evidence>
<feature type="chain" id="PRO_1000045893" description="Septation ring formation regulator EzrA">
    <location>
        <begin position="1"/>
        <end position="570"/>
    </location>
</feature>
<feature type="topological domain" description="Extracellular" evidence="1">
    <location>
        <begin position="1"/>
        <end position="6"/>
    </location>
</feature>
<feature type="transmembrane region" description="Helical" evidence="1">
    <location>
        <begin position="7"/>
        <end position="25"/>
    </location>
</feature>
<feature type="topological domain" description="Cytoplasmic" evidence="1">
    <location>
        <begin position="26"/>
        <end position="570"/>
    </location>
</feature>
<feature type="coiled-coil region" evidence="1">
    <location>
        <begin position="115"/>
        <end position="149"/>
    </location>
</feature>
<feature type="coiled-coil region" evidence="1">
    <location>
        <begin position="272"/>
        <end position="304"/>
    </location>
</feature>
<feature type="coiled-coil region" evidence="1">
    <location>
        <begin position="355"/>
        <end position="429"/>
    </location>
</feature>
<proteinExistence type="inferred from homology"/>
<reference key="1">
    <citation type="journal article" date="2006" name="J. Bacteriol.">
        <title>Pathogenomic sequence analysis of Bacillus cereus and Bacillus thuringiensis isolates closely related to Bacillus anthracis.</title>
        <authorList>
            <person name="Han C.S."/>
            <person name="Xie G."/>
            <person name="Challacombe J.F."/>
            <person name="Altherr M.R."/>
            <person name="Bhotika S.S."/>
            <person name="Bruce D."/>
            <person name="Campbell C.S."/>
            <person name="Campbell M.L."/>
            <person name="Chen J."/>
            <person name="Chertkov O."/>
            <person name="Cleland C."/>
            <person name="Dimitrijevic M."/>
            <person name="Doggett N.A."/>
            <person name="Fawcett J.J."/>
            <person name="Glavina T."/>
            <person name="Goodwin L.A."/>
            <person name="Hill K.K."/>
            <person name="Hitchcock P."/>
            <person name="Jackson P.J."/>
            <person name="Keim P."/>
            <person name="Kewalramani A.R."/>
            <person name="Longmire J."/>
            <person name="Lucas S."/>
            <person name="Malfatti S."/>
            <person name="McMurry K."/>
            <person name="Meincke L.J."/>
            <person name="Misra M."/>
            <person name="Moseman B.L."/>
            <person name="Mundt M."/>
            <person name="Munk A.C."/>
            <person name="Okinaka R.T."/>
            <person name="Parson-Quintana B."/>
            <person name="Reilly L.P."/>
            <person name="Richardson P."/>
            <person name="Robinson D.L."/>
            <person name="Rubin E."/>
            <person name="Saunders E."/>
            <person name="Tapia R."/>
            <person name="Tesmer J.G."/>
            <person name="Thayer N."/>
            <person name="Thompson L.S."/>
            <person name="Tice H."/>
            <person name="Ticknor L.O."/>
            <person name="Wills P.L."/>
            <person name="Brettin T.S."/>
            <person name="Gilna P."/>
        </authorList>
    </citation>
    <scope>NUCLEOTIDE SEQUENCE [LARGE SCALE GENOMIC DNA]</scope>
    <source>
        <strain>ZK / E33L</strain>
    </source>
</reference>
<organism>
    <name type="scientific">Bacillus cereus (strain ZK / E33L)</name>
    <dbReference type="NCBI Taxonomy" id="288681"/>
    <lineage>
        <taxon>Bacteria</taxon>
        <taxon>Bacillati</taxon>
        <taxon>Bacillota</taxon>
        <taxon>Bacilli</taxon>
        <taxon>Bacillales</taxon>
        <taxon>Bacillaceae</taxon>
        <taxon>Bacillus</taxon>
        <taxon>Bacillus cereus group</taxon>
    </lineage>
</organism>
<sequence length="570" mass="66436">MDSILTIVIIVVSSILVLLMIELVIRNRSYKDIEALEQWKQEIKDKPVADELKRVKDLNMTGQTEELFGKWREEWDEIVSTTIPKADKDLAQARKFASQFSFRKAKHAMNESISGLDDADNRITDILNELQQLLESHEKNSSEIEGLRDTYRSMKKSVLAHRHMYGAAEQKIEEMLDAESEKFKTFEEATNNGDYLKAREIVISLEEGLADLEIIIHQIPDLLVECQATLPVQLEDLLHGHNDMVRQGYVLDYLEVPKEVRDMTKQLQTCLIDIQELHITEAAEKVENLKTRLDGFYDQLEQEVHARHYVEQKTLSVYEDLEEIRTETIETKAETQLVKQSYQLQDKDIESQKVIEKQMHILTKRFEMLQLRVAEQDIAFSIIREELEEIYEQCETLKVLHAEYKEMLQTMRKEEFEAREKLQEMRNTIFETKRFMQKSNLPGLPESIMEDLKRGQMAMQAVYEQLEVKPLNMNAVNSSLEEAYTTVNGVAEMTEELIGQAYLVEKLIQYGNRYRSHDENLAESLNYAEKLFREYQYDAALEQAASVLEQLEPGVVQKIAEYVDNEQTLS</sequence>
<gene>
    <name evidence="1" type="primary">ezrA</name>
    <name type="ordered locus">BCE33L4393</name>
</gene>
<comment type="function">
    <text evidence="1">Negative regulator of FtsZ ring formation; modulates the frequency and position of FtsZ ring formation. Inhibits FtsZ ring formation at polar sites. Interacts either with FtsZ or with one of its binding partners to promote depolymerization.</text>
</comment>
<comment type="subcellular location">
    <subcellularLocation>
        <location evidence="1">Cell membrane</location>
        <topology evidence="1">Single-pass membrane protein</topology>
    </subcellularLocation>
    <text evidence="1">Colocalized with FtsZ to the nascent septal site.</text>
</comment>
<comment type="similarity">
    <text evidence="1">Belongs to the EzrA family.</text>
</comment>
<dbReference type="EMBL" id="CP000001">
    <property type="protein sequence ID" value="AAU15877.1"/>
    <property type="molecule type" value="Genomic_DNA"/>
</dbReference>
<dbReference type="RefSeq" id="WP_000377289.1">
    <property type="nucleotide sequence ID" value="NZ_CP009968.1"/>
</dbReference>
<dbReference type="SMR" id="Q633E6"/>
<dbReference type="GeneID" id="45024522"/>
<dbReference type="KEGG" id="bcz:BCE33L4393"/>
<dbReference type="PATRIC" id="fig|288681.22.peg.978"/>
<dbReference type="Proteomes" id="UP000002612">
    <property type="component" value="Chromosome"/>
</dbReference>
<dbReference type="GO" id="GO:0005886">
    <property type="term" value="C:plasma membrane"/>
    <property type="evidence" value="ECO:0007669"/>
    <property type="project" value="UniProtKB-SubCell"/>
</dbReference>
<dbReference type="GO" id="GO:0005940">
    <property type="term" value="C:septin ring"/>
    <property type="evidence" value="ECO:0007669"/>
    <property type="project" value="InterPro"/>
</dbReference>
<dbReference type="GO" id="GO:0000917">
    <property type="term" value="P:division septum assembly"/>
    <property type="evidence" value="ECO:0007669"/>
    <property type="project" value="UniProtKB-KW"/>
</dbReference>
<dbReference type="GO" id="GO:0000921">
    <property type="term" value="P:septin ring assembly"/>
    <property type="evidence" value="ECO:0007669"/>
    <property type="project" value="InterPro"/>
</dbReference>
<dbReference type="HAMAP" id="MF_00728">
    <property type="entry name" value="EzrA"/>
    <property type="match status" value="1"/>
</dbReference>
<dbReference type="InterPro" id="IPR010379">
    <property type="entry name" value="EzrA"/>
</dbReference>
<dbReference type="NCBIfam" id="NF003411">
    <property type="entry name" value="PRK04778.1-5"/>
    <property type="match status" value="1"/>
</dbReference>
<dbReference type="NCBIfam" id="NF003413">
    <property type="entry name" value="PRK04778.1-7"/>
    <property type="match status" value="1"/>
</dbReference>
<dbReference type="Pfam" id="PF06160">
    <property type="entry name" value="EzrA"/>
    <property type="match status" value="1"/>
</dbReference>
<name>EZRA_BACCZ</name>
<accession>Q633E6</accession>